<keyword id="KW-0998">Cell outer membrane</keyword>
<keyword id="KW-0472">Membrane</keyword>
<keyword id="KW-1185">Reference proteome</keyword>
<keyword id="KW-0677">Repeat</keyword>
<keyword id="KW-0732">Signal</keyword>
<keyword id="KW-0812">Transmembrane</keyword>
<keyword id="KW-1134">Transmembrane beta strand</keyword>
<comment type="function">
    <text evidence="2">Part of the outer membrane protein assembly complex, which is involved in assembly and insertion of beta-barrel proteins into the outer membrane. Constitutes, with BamD, the core component of the assembly machinery.</text>
</comment>
<comment type="function">
    <text evidence="4">Does not normally serve as a receptor for CdiA-EC93, the contact-dependent growth inhibition (CDI) effector of E.coli strain EC93. However if extracellular loops 6 and 7 are mutated to match the sequence of E.coli then the protein is able to act as a CdiA-EC93 receptor, conferring CDI on E.coli strains expressing the mutated BamA. The same mutations also support the delivery of CdiA-CT from strain 536 / UPEC.</text>
</comment>
<comment type="subunit">
    <text evidence="2">Part of the Bam complex, which is composed of the outer membrane protein BamA, and four lipoproteins BamB, BamC, BamD and BamE.</text>
</comment>
<comment type="subcellular location">
    <subcellularLocation>
        <location evidence="2">Cell outer membrane</location>
    </subcellularLocation>
</comment>
<comment type="similarity">
    <text evidence="2">Belongs to the BamA family.</text>
</comment>
<reference key="1">
    <citation type="journal article" date="2010" name="J. Bacteriol.">
        <title>Complete genome sequence of Enterobacter cloacae subsp. cloacae type strain ATCC 13047.</title>
        <authorList>
            <person name="Ren Y."/>
            <person name="Ren Y."/>
            <person name="Zhou Z."/>
            <person name="Guo X."/>
            <person name="Li Y."/>
            <person name="Feng L."/>
            <person name="Wang L."/>
        </authorList>
    </citation>
    <scope>NUCLEOTIDE SEQUENCE [LARGE SCALE GENOMIC DNA]</scope>
    <source>
        <strain>ATCC 13047 / DSM 30054 / NBRC 13535 / NCTC 10005 / WDCM 00083 / NCDC 279-56</strain>
    </source>
</reference>
<reference key="2">
    <citation type="journal article" date="2013" name="MBio">
        <title>Receptor polymorphism restricts contact-dependent growth inhibition to members of the same species.</title>
        <authorList>
            <person name="Ruhe Z.C."/>
            <person name="Wallace A.B."/>
            <person name="Low D.A."/>
            <person name="Hayes C.S."/>
        </authorList>
    </citation>
    <scope>FUNCTION IN CDI</scope>
    <scope>STRAIN SPECIFICITY</scope>
    <scope>MUTAGENESIS OF 550-ASP--ALA-567; 675-TYR--SER-693 AND 742-GLU--VAL-752</scope>
    <scope>EXPRESSION IN E.COLI</scope>
    <source>
        <strain>ATCC 13047 / DSM 30054 / NBRC 13535 / NCTC 10005 / WDCM 00083 / NCDC 279-56</strain>
    </source>
</reference>
<name>BAMA_ENTCC</name>
<proteinExistence type="evidence at protein level"/>
<protein>
    <recommendedName>
        <fullName evidence="2">Outer membrane protein assembly factor BamA</fullName>
    </recommendedName>
</protein>
<sequence length="805" mass="89360">MAMKKLLIASLLFSSATVYGADGFVVKDIHFEGLQRVAVGAALLSMPVRPGDTVNDDDISNTIRALFATGNFEDVRVLRDGDTLLVQVKERPTIASITFSGNKSVKDDMLKQNLEASGVRVGESLDRTTLSDIEKGLEDFYYSVGKYSASVKAVVTPLPRNRVDLKLVFQEGVSAKIQQINIVGNHAFTTDELISTFQLRDEVPWWNVVGDRKYQKQKLAGDLETLRSYYLDRGYARFNIDSTQVSLTPDKKGIYITINITEGDQYKLSGVEVSGNLAGHSAEIESLTKIQPGDLYSGSKVTKMEDGIKKLLGRYGYAYPRVQTQPEINDADKTVKLHVNVDAGNRFYVRKIRFEGNDTSKDSVLRREMRQMEGAWLGSDLVDQGKERLNRLGYFETVDTDTQRVPGSPDQVDVVYKVKERNTGSFNFGVGYGTESGVSFQVGVQQDNWLGTGYSVGINGTKNDYQTYSEFSVTNPYFTVDGVSLGGRIFYNDFKADDADLSSYTNKSYGVDGTLGFPVNEYNTLRAGLGYVHNDLSNMQPQVAMWRYLDSIGQSASTSSDNNGFAADDFTFNYGWTYNRLDRGYFPTEGSRVNLNGKVTIPGSDNEFYKLTLDTASYFPIDDDHKWVVLGRTRWGYGDGLGGKEMPFYENFYAGGSSTVRGFQSNNIGPKAVYYGGNDEDNCASRDPKQVCSSDDAVGGNAMAVASLEFITPTPFISDKYANSVRTSFFWDAGTVWDTNWENTAQMRAAGVPDYSDPGNIRMSAGIALQWMSPLGPLVFSYAQPFKKYDGDKSEQFQFNIGKTW</sequence>
<gene>
    <name evidence="2" type="primary">bamA</name>
    <name type="ordered locus">ECL_00980</name>
</gene>
<dbReference type="EMBL" id="CP001918">
    <property type="protein sequence ID" value="ADF60543.1"/>
    <property type="molecule type" value="Genomic_DNA"/>
</dbReference>
<dbReference type="RefSeq" id="WP_013095659.1">
    <property type="nucleotide sequence ID" value="NC_014121.1"/>
</dbReference>
<dbReference type="RefSeq" id="YP_003611492.1">
    <property type="nucleotide sequence ID" value="NC_014121.1"/>
</dbReference>
<dbReference type="SMR" id="D5CHY0"/>
<dbReference type="STRING" id="716541.ECL_00980"/>
<dbReference type="EnsemblBacteria" id="ADF60543">
    <property type="protein sequence ID" value="ADF60543"/>
    <property type="gene ID" value="ECL_00980"/>
</dbReference>
<dbReference type="GeneID" id="83572122"/>
<dbReference type="KEGG" id="enc:ECL_00980"/>
<dbReference type="PATRIC" id="fig|716541.4.peg.1238"/>
<dbReference type="eggNOG" id="COG4775">
    <property type="taxonomic scope" value="Bacteria"/>
</dbReference>
<dbReference type="HOGENOM" id="CLU_007664_1_0_6"/>
<dbReference type="OrthoDB" id="9803054at2"/>
<dbReference type="Proteomes" id="UP000002363">
    <property type="component" value="Chromosome"/>
</dbReference>
<dbReference type="GO" id="GO:1990063">
    <property type="term" value="C:Bam protein complex"/>
    <property type="evidence" value="ECO:0007669"/>
    <property type="project" value="TreeGrafter"/>
</dbReference>
<dbReference type="GO" id="GO:0043165">
    <property type="term" value="P:Gram-negative-bacterium-type cell outer membrane assembly"/>
    <property type="evidence" value="ECO:0007669"/>
    <property type="project" value="UniProtKB-UniRule"/>
</dbReference>
<dbReference type="GO" id="GO:0051205">
    <property type="term" value="P:protein insertion into membrane"/>
    <property type="evidence" value="ECO:0007669"/>
    <property type="project" value="UniProtKB-UniRule"/>
</dbReference>
<dbReference type="FunFam" id="2.40.160.50:FF:000001">
    <property type="entry name" value="Outer membrane protein assembly factor BamA"/>
    <property type="match status" value="1"/>
</dbReference>
<dbReference type="FunFam" id="3.10.20.310:FF:000001">
    <property type="entry name" value="Outer membrane protein assembly factor BamA"/>
    <property type="match status" value="1"/>
</dbReference>
<dbReference type="FunFam" id="3.10.20.310:FF:000002">
    <property type="entry name" value="Outer membrane protein assembly factor BamA"/>
    <property type="match status" value="1"/>
</dbReference>
<dbReference type="FunFam" id="3.10.20.310:FF:000003">
    <property type="entry name" value="Outer membrane protein assembly factor BamA"/>
    <property type="match status" value="1"/>
</dbReference>
<dbReference type="FunFam" id="3.10.20.310:FF:000004">
    <property type="entry name" value="Outer membrane protein assembly factor BamA"/>
    <property type="match status" value="1"/>
</dbReference>
<dbReference type="FunFam" id="3.10.20.310:FF:000005">
    <property type="entry name" value="Outer membrane protein assembly factor BamA"/>
    <property type="match status" value="1"/>
</dbReference>
<dbReference type="Gene3D" id="3.10.20.310">
    <property type="entry name" value="membrane protein fhac"/>
    <property type="match status" value="5"/>
</dbReference>
<dbReference type="Gene3D" id="2.40.160.50">
    <property type="entry name" value="membrane protein fhac: a member of the omp85/tpsb transporter family"/>
    <property type="match status" value="1"/>
</dbReference>
<dbReference type="HAMAP" id="MF_01430">
    <property type="entry name" value="OM_assembly_BamA"/>
    <property type="match status" value="1"/>
</dbReference>
<dbReference type="InterPro" id="IPR000184">
    <property type="entry name" value="Bac_surfAg_D15"/>
</dbReference>
<dbReference type="InterPro" id="IPR010827">
    <property type="entry name" value="BamA/TamA_POTRA"/>
</dbReference>
<dbReference type="InterPro" id="IPR039910">
    <property type="entry name" value="D15-like"/>
</dbReference>
<dbReference type="InterPro" id="IPR023707">
    <property type="entry name" value="OM_assembly_BamA"/>
</dbReference>
<dbReference type="InterPro" id="IPR034746">
    <property type="entry name" value="POTRA"/>
</dbReference>
<dbReference type="NCBIfam" id="TIGR03303">
    <property type="entry name" value="OM_YaeT"/>
    <property type="match status" value="1"/>
</dbReference>
<dbReference type="NCBIfam" id="NF008287">
    <property type="entry name" value="PRK11067.1"/>
    <property type="match status" value="1"/>
</dbReference>
<dbReference type="PANTHER" id="PTHR12815:SF23">
    <property type="entry name" value="OUTER MEMBRANE PROTEIN ASSEMBLY FACTOR BAMA"/>
    <property type="match status" value="1"/>
</dbReference>
<dbReference type="PANTHER" id="PTHR12815">
    <property type="entry name" value="SORTING AND ASSEMBLY MACHINERY SAMM50 PROTEIN FAMILY MEMBER"/>
    <property type="match status" value="1"/>
</dbReference>
<dbReference type="Pfam" id="PF01103">
    <property type="entry name" value="Omp85"/>
    <property type="match status" value="1"/>
</dbReference>
<dbReference type="Pfam" id="PF07244">
    <property type="entry name" value="POTRA"/>
    <property type="match status" value="4"/>
</dbReference>
<dbReference type="PIRSF" id="PIRSF006076">
    <property type="entry name" value="OM_assembly_OMP85"/>
    <property type="match status" value="1"/>
</dbReference>
<dbReference type="PROSITE" id="PS51779">
    <property type="entry name" value="POTRA"/>
    <property type="match status" value="5"/>
</dbReference>
<evidence type="ECO:0000250" key="1">
    <source>
        <dbReference type="UniProtKB" id="P0A940"/>
    </source>
</evidence>
<evidence type="ECO:0000255" key="2">
    <source>
        <dbReference type="HAMAP-Rule" id="MF_01430"/>
    </source>
</evidence>
<evidence type="ECO:0000255" key="3">
    <source>
        <dbReference type="PROSITE-ProRule" id="PRU01115"/>
    </source>
</evidence>
<evidence type="ECO:0000269" key="4">
    <source>
    </source>
</evidence>
<evidence type="ECO:0000305" key="5"/>
<accession>D5CHY0</accession>
<feature type="signal peptide" evidence="2">
    <location>
        <begin position="1"/>
        <end position="20"/>
    </location>
</feature>
<feature type="chain" id="PRO_0000432092" description="Outer membrane protein assembly factor BamA">
    <location>
        <begin position="21"/>
        <end position="805"/>
    </location>
</feature>
<feature type="topological domain" description="Periplasmic" evidence="5">
    <location>
        <begin position="21"/>
        <end position="424"/>
    </location>
</feature>
<feature type="transmembrane region" description="Beta stranded" evidence="1">
    <location>
        <begin position="425"/>
        <end position="433"/>
    </location>
</feature>
<feature type="topological domain" description="Extracellular" evidence="5">
    <location>
        <begin position="434"/>
        <end position="435"/>
    </location>
</feature>
<feature type="transmembrane region" description="Beta stranded" evidence="1">
    <location>
        <begin position="436"/>
        <end position="446"/>
    </location>
</feature>
<feature type="topological domain" description="Periplasmic" evidence="5">
    <location>
        <begin position="447"/>
        <end position="454"/>
    </location>
</feature>
<feature type="transmembrane region" description="Beta stranded" evidence="1">
    <location>
        <begin position="455"/>
        <end position="462"/>
    </location>
</feature>
<feature type="topological domain" description="Extracellular" evidence="5">
    <location>
        <begin position="463"/>
        <end position="465"/>
    </location>
</feature>
<feature type="transmembrane region" description="Beta stranded" evidence="1">
    <location>
        <begin position="466"/>
        <end position="475"/>
    </location>
</feature>
<feature type="topological domain" description="Periplasmic" evidence="5">
    <location>
        <begin position="476"/>
        <end position="483"/>
    </location>
</feature>
<feature type="transmembrane region" description="Beta stranded" evidence="1">
    <location>
        <begin position="484"/>
        <end position="495"/>
    </location>
</feature>
<feature type="topological domain" description="Extracellular" evidence="5">
    <location>
        <begin position="496"/>
        <end position="504"/>
    </location>
</feature>
<feature type="transmembrane region" description="Beta stranded" evidence="1">
    <location>
        <begin position="505"/>
        <end position="506"/>
    </location>
</feature>
<feature type="topological domain" description="Periplasmic" evidence="5">
    <location>
        <begin position="507"/>
        <end position="522"/>
    </location>
</feature>
<feature type="transmembrane region" description="Beta stranded" evidence="1">
    <location>
        <begin position="523"/>
        <end position="535"/>
    </location>
</feature>
<feature type="topological domain" description="Extracellular" evidence="5">
    <location>
        <begin position="536"/>
        <end position="563"/>
    </location>
</feature>
<feature type="transmembrane region" description="Beta stranded" evidence="1">
    <location>
        <begin position="564"/>
        <end position="577"/>
    </location>
</feature>
<feature type="topological domain" description="Periplasmic" evidence="5">
    <location>
        <begin position="578"/>
        <end position="590"/>
    </location>
</feature>
<feature type="transmembrane region" description="Beta stranded" evidence="1">
    <location>
        <begin position="591"/>
        <end position="600"/>
    </location>
</feature>
<feature type="topological domain" description="Extracellular" evidence="5">
    <location>
        <begin position="601"/>
        <end position="608"/>
    </location>
</feature>
<feature type="transmembrane region" description="Beta stranded" evidence="1">
    <location>
        <begin position="609"/>
        <end position="619"/>
    </location>
</feature>
<feature type="topological domain" description="Periplasmic" evidence="5">
    <location>
        <begin position="620"/>
        <end position="628"/>
    </location>
</feature>
<feature type="transmembrane region" description="Beta stranded" evidence="1">
    <location>
        <begin position="629"/>
        <end position="639"/>
    </location>
</feature>
<feature type="topological domain" description="Extracellular; loop 6" evidence="5">
    <location>
        <begin position="640"/>
        <end position="700"/>
    </location>
</feature>
<feature type="transmembrane region" description="Beta stranded" evidence="1">
    <location>
        <begin position="701"/>
        <end position="710"/>
    </location>
</feature>
<feature type="topological domain" description="Periplasmic" evidence="5">
    <location>
        <begin position="711"/>
        <end position="724"/>
    </location>
</feature>
<feature type="transmembrane region" description="Beta stranded" evidence="1">
    <location>
        <begin position="725"/>
        <end position="737"/>
    </location>
</feature>
<feature type="topological domain" description="Extracellular; loop 7" evidence="5">
    <location>
        <begin position="738"/>
        <end position="762"/>
    </location>
</feature>
<feature type="transmembrane region" description="Beta stranded" evidence="1">
    <location>
        <begin position="763"/>
        <end position="772"/>
    </location>
</feature>
<feature type="topological domain" description="Periplasmic" evidence="5">
    <location>
        <position position="773"/>
    </location>
</feature>
<feature type="transmembrane region" description="Beta stranded" evidence="1">
    <location>
        <begin position="774"/>
        <end position="784"/>
    </location>
</feature>
<feature type="topological domain" description="Extracellular" evidence="5">
    <location>
        <begin position="785"/>
        <end position="798"/>
    </location>
</feature>
<feature type="transmembrane region" description="Beta stranded" evidence="1">
    <location>
        <begin position="799"/>
        <end position="803"/>
    </location>
</feature>
<feature type="domain" description="POTRA 1" evidence="3">
    <location>
        <begin position="24"/>
        <end position="91"/>
    </location>
</feature>
<feature type="domain" description="POTRA 2" evidence="3">
    <location>
        <begin position="92"/>
        <end position="172"/>
    </location>
</feature>
<feature type="domain" description="POTRA 3" evidence="3">
    <location>
        <begin position="175"/>
        <end position="263"/>
    </location>
</feature>
<feature type="domain" description="POTRA 4" evidence="3">
    <location>
        <begin position="266"/>
        <end position="344"/>
    </location>
</feature>
<feature type="domain" description="POTRA 5" evidence="3">
    <location>
        <begin position="347"/>
        <end position="421"/>
    </location>
</feature>
<feature type="mutagenesis site" description="Loop 4 to E.coli sequence; resistant to CdiA-EC93." evidence="4">
    <original>DSIGQSASTSSDNNGFAA</original>
    <variation>YSMGEHPSTSDQDNSFKT</variation>
    <location>
        <begin position="550"/>
        <end position="567"/>
    </location>
</feature>
<feature type="mutagenesis site" description="Loop 6 to E.coli sequence; resistant to CdiA-EC93. Susceptible to CdiA-EC93, forms aggregates with CdiA-EC93 cells; when associated with 742-D--Y-752." evidence="4">
    <original>YGGNDEDNCASRDPKQVCS</original>
    <variation>FPHQASNYDPDYDYECATQDGAKDLCK</variation>
    <location>
        <begin position="675"/>
        <end position="693"/>
    </location>
</feature>
<feature type="mutagenesis site" description="Loop 7 to E.coli sequence; resistant to CdiA-EC93. Susceptible to CdiA-EC93, forms aggregates with CdiA-EC93 cells; when associated with 675-F--K-693." evidence="4">
    <original>ENTAQMRAAGV</original>
    <variation>DSSQYSGY</variation>
    <location>
        <begin position="742"/>
        <end position="752"/>
    </location>
</feature>
<organism>
    <name type="scientific">Enterobacter cloacae subsp. cloacae (strain ATCC 13047 / DSM 30054 / NBRC 13535 / NCTC 10005 / WDCM 00083 / NCDC 279-56)</name>
    <dbReference type="NCBI Taxonomy" id="716541"/>
    <lineage>
        <taxon>Bacteria</taxon>
        <taxon>Pseudomonadati</taxon>
        <taxon>Pseudomonadota</taxon>
        <taxon>Gammaproteobacteria</taxon>
        <taxon>Enterobacterales</taxon>
        <taxon>Enterobacteriaceae</taxon>
        <taxon>Enterobacter</taxon>
        <taxon>Enterobacter cloacae complex</taxon>
    </lineage>
</organism>